<name>RECA_NEIFL</name>
<feature type="chain" id="PRO_0000122773" description="Protein RecA">
    <location>
        <begin position="1" status="less than"/>
        <end position="274" status="greater than"/>
    </location>
</feature>
<feature type="binding site" evidence="1">
    <location>
        <begin position="43"/>
        <end position="50"/>
    </location>
    <ligand>
        <name>ATP</name>
        <dbReference type="ChEBI" id="CHEBI:30616"/>
    </ligand>
</feature>
<feature type="non-terminal residue">
    <location>
        <position position="1"/>
    </location>
</feature>
<feature type="non-terminal residue">
    <location>
        <position position="274"/>
    </location>
</feature>
<proteinExistence type="inferred from homology"/>
<keyword id="KW-0067">ATP-binding</keyword>
<keyword id="KW-0963">Cytoplasm</keyword>
<keyword id="KW-0227">DNA damage</keyword>
<keyword id="KW-0233">DNA recombination</keyword>
<keyword id="KW-0234">DNA repair</keyword>
<keyword id="KW-0238">DNA-binding</keyword>
<keyword id="KW-0547">Nucleotide-binding</keyword>
<keyword id="KW-0742">SOS response</keyword>
<gene>
    <name evidence="1" type="primary">recA</name>
</gene>
<organism>
    <name type="scientific">Neisseria flavescens</name>
    <dbReference type="NCBI Taxonomy" id="484"/>
    <lineage>
        <taxon>Bacteria</taxon>
        <taxon>Pseudomonadati</taxon>
        <taxon>Pseudomonadota</taxon>
        <taxon>Betaproteobacteria</taxon>
        <taxon>Neisseriales</taxon>
        <taxon>Neisseriaceae</taxon>
        <taxon>Neisseria</taxon>
    </lineage>
</organism>
<protein>
    <recommendedName>
        <fullName evidence="1">Protein RecA</fullName>
    </recommendedName>
    <alternativeName>
        <fullName evidence="1">Recombinase A</fullName>
    </alternativeName>
</protein>
<evidence type="ECO:0000255" key="1">
    <source>
        <dbReference type="HAMAP-Rule" id="MF_00268"/>
    </source>
</evidence>
<sequence>SIMKMDGSQQEENLDVISTGSLGVDLALGVGGLPRGRVVEIFGPESSGKTTLCLEAIAQCQKNGGICAFIDAEHAFDPIYARKLGVKVEELYLSQPDTGEQALEICDTLVRSGGIDMVVVDSVAALVPKAEIEGEMGDSHVGLQARLMSQALRKLTGHIKRTNTLVVFINQIRMKIGVMFGSPETTTGGNALKFYASVRLDIRRTGQIKKGDDVIGNETKVKVIKNKVAPPFRQAEFDILYGEGISWEGELIDLGVKHDIVEKSGAWYSYNGAK</sequence>
<comment type="function">
    <text evidence="1">Can catalyze the hydrolysis of ATP in the presence of single-stranded DNA, the ATP-dependent uptake of single-stranded DNA by duplex DNA, and the ATP-dependent hybridization of homologous single-stranded DNAs. It interacts with LexA causing its activation and leading to its autocatalytic cleavage.</text>
</comment>
<comment type="subcellular location">
    <subcellularLocation>
        <location evidence="1">Cytoplasm</location>
    </subcellularLocation>
</comment>
<comment type="similarity">
    <text evidence="1">Belongs to the RecA family.</text>
</comment>
<reference key="1">
    <citation type="journal article" date="1996" name="J. Mol. Evol.">
        <title>A comparison of the nucleotide sequences of the adk and recA genes of pathogenic and commensal Neisseria species: evidence for extensive interspecies recombination within adk.</title>
        <authorList>
            <person name="Feil E."/>
            <person name="Zhou J."/>
            <person name="Maynard Smith J."/>
            <person name="Spratt B.G."/>
        </authorList>
    </citation>
    <scope>NUCLEOTIDE SEQUENCE [GENOMIC DNA]</scope>
    <source>
        <strain>LNP 444</strain>
    </source>
</reference>
<dbReference type="EMBL" id="U57907">
    <property type="protein sequence ID" value="AAB49192.1"/>
    <property type="molecule type" value="Genomic_DNA"/>
</dbReference>
<dbReference type="SMR" id="Q59597"/>
<dbReference type="STRING" id="484.TW91_1271"/>
<dbReference type="GO" id="GO:0005829">
    <property type="term" value="C:cytosol"/>
    <property type="evidence" value="ECO:0007669"/>
    <property type="project" value="TreeGrafter"/>
</dbReference>
<dbReference type="GO" id="GO:0005524">
    <property type="term" value="F:ATP binding"/>
    <property type="evidence" value="ECO:0007669"/>
    <property type="project" value="UniProtKB-KW"/>
</dbReference>
<dbReference type="GO" id="GO:0016887">
    <property type="term" value="F:ATP hydrolysis activity"/>
    <property type="evidence" value="ECO:0007669"/>
    <property type="project" value="InterPro"/>
</dbReference>
<dbReference type="GO" id="GO:0140664">
    <property type="term" value="F:ATP-dependent DNA damage sensor activity"/>
    <property type="evidence" value="ECO:0007669"/>
    <property type="project" value="InterPro"/>
</dbReference>
<dbReference type="GO" id="GO:0003697">
    <property type="term" value="F:single-stranded DNA binding"/>
    <property type="evidence" value="ECO:0007669"/>
    <property type="project" value="InterPro"/>
</dbReference>
<dbReference type="GO" id="GO:0006310">
    <property type="term" value="P:DNA recombination"/>
    <property type="evidence" value="ECO:0007669"/>
    <property type="project" value="UniProtKB-KW"/>
</dbReference>
<dbReference type="GO" id="GO:0006281">
    <property type="term" value="P:DNA repair"/>
    <property type="evidence" value="ECO:0007669"/>
    <property type="project" value="UniProtKB-KW"/>
</dbReference>
<dbReference type="GO" id="GO:0009432">
    <property type="term" value="P:SOS response"/>
    <property type="evidence" value="ECO:0007669"/>
    <property type="project" value="UniProtKB-KW"/>
</dbReference>
<dbReference type="CDD" id="cd00983">
    <property type="entry name" value="RecA"/>
    <property type="match status" value="1"/>
</dbReference>
<dbReference type="FunFam" id="3.40.50.300:FF:000087">
    <property type="entry name" value="Recombinase RecA"/>
    <property type="match status" value="1"/>
</dbReference>
<dbReference type="Gene3D" id="3.40.50.300">
    <property type="entry name" value="P-loop containing nucleotide triphosphate hydrolases"/>
    <property type="match status" value="1"/>
</dbReference>
<dbReference type="HAMAP" id="MF_00268">
    <property type="entry name" value="RecA"/>
    <property type="match status" value="1"/>
</dbReference>
<dbReference type="InterPro" id="IPR003593">
    <property type="entry name" value="AAA+_ATPase"/>
</dbReference>
<dbReference type="InterPro" id="IPR013765">
    <property type="entry name" value="DNA_recomb/repair_RecA"/>
</dbReference>
<dbReference type="InterPro" id="IPR020584">
    <property type="entry name" value="DNA_recomb/repair_RecA_CS"/>
</dbReference>
<dbReference type="InterPro" id="IPR027417">
    <property type="entry name" value="P-loop_NTPase"/>
</dbReference>
<dbReference type="InterPro" id="IPR049261">
    <property type="entry name" value="RecA-like_C"/>
</dbReference>
<dbReference type="InterPro" id="IPR049428">
    <property type="entry name" value="RecA-like_N"/>
</dbReference>
<dbReference type="InterPro" id="IPR020588">
    <property type="entry name" value="RecA_ATP-bd"/>
</dbReference>
<dbReference type="InterPro" id="IPR023400">
    <property type="entry name" value="RecA_C_sf"/>
</dbReference>
<dbReference type="InterPro" id="IPR020587">
    <property type="entry name" value="RecA_monomer-monomer_interface"/>
</dbReference>
<dbReference type="NCBIfam" id="TIGR02012">
    <property type="entry name" value="tigrfam_recA"/>
    <property type="match status" value="1"/>
</dbReference>
<dbReference type="PANTHER" id="PTHR45900:SF1">
    <property type="entry name" value="MITOCHONDRIAL DNA REPAIR PROTEIN RECA HOMOLOG-RELATED"/>
    <property type="match status" value="1"/>
</dbReference>
<dbReference type="PANTHER" id="PTHR45900">
    <property type="entry name" value="RECA"/>
    <property type="match status" value="1"/>
</dbReference>
<dbReference type="Pfam" id="PF00154">
    <property type="entry name" value="RecA"/>
    <property type="match status" value="1"/>
</dbReference>
<dbReference type="Pfam" id="PF21096">
    <property type="entry name" value="RecA_C"/>
    <property type="match status" value="1"/>
</dbReference>
<dbReference type="PRINTS" id="PR00142">
    <property type="entry name" value="RECA"/>
</dbReference>
<dbReference type="SMART" id="SM00382">
    <property type="entry name" value="AAA"/>
    <property type="match status" value="1"/>
</dbReference>
<dbReference type="SUPFAM" id="SSF52540">
    <property type="entry name" value="P-loop containing nucleoside triphosphate hydrolases"/>
    <property type="match status" value="1"/>
</dbReference>
<dbReference type="SUPFAM" id="SSF54752">
    <property type="entry name" value="RecA protein, C-terminal domain"/>
    <property type="match status" value="1"/>
</dbReference>
<dbReference type="PROSITE" id="PS00321">
    <property type="entry name" value="RECA_1"/>
    <property type="match status" value="1"/>
</dbReference>
<dbReference type="PROSITE" id="PS50162">
    <property type="entry name" value="RECA_2"/>
    <property type="match status" value="1"/>
</dbReference>
<dbReference type="PROSITE" id="PS50163">
    <property type="entry name" value="RECA_3"/>
    <property type="match status" value="1"/>
</dbReference>
<accession>Q59597</accession>